<accession>Q5DTT4</accession>
<sequence>MSEAAGNLNSLRLANVALREELNALRGENVQLGLQLGRALAEVNSLRGNVSSYIRWPMPIVPVLAEENFEFLLNETDPTPEEEEEEEEEVPFLCWPPPRTDPEYVSDDLLINVVQDYTNPDGSSDPPLSPSPSQPELHSPMLKEPTFEFLLPPLERPDIEPFSGDPVYLAEFLMQLETFIADHEDHFPGGAERVAFLISFFTGEARDWAISVTQEGSSLHANFPRFLDEIRKEFCGPIPSRVAKKAIRKLKQGNCTLGSYADAFQFLAQFLSWDDCRLQNQFLKGLSEIFRKELLWSTEVADLDELILECVKIERKVRVPKTASLTGVQNSCCPFALIPNEDENEGVEFYSENEGEGEEAGGYRLYLKDQRQHMTAFPQEMREEEEEMRKEEDEMEDEEDEDEDEDYEFEEEDEDDDDEEEEEEEEEEEDKEEEMKNEDSDENKYEEEDEVIVRVLEPEQEQEREEIEHEHVYVHEHIHAHVHTLAAHHHGLHGELMVMDEPVLVDTSTQTISSAIGYHAENYLGVSPSVMHSSRQRSQNRVPLLEGLPGTNSSFYSPPPLMRHAGRLGQRQMRRCPSVLFCLTPRQGGHRATQGRIRV</sequence>
<evidence type="ECO:0000250" key="1">
    <source>
        <dbReference type="UniProtKB" id="Q5HYW3"/>
    </source>
</evidence>
<evidence type="ECO:0000256" key="2">
    <source>
        <dbReference type="SAM" id="MobiDB-lite"/>
    </source>
</evidence>
<evidence type="ECO:0000269" key="3">
    <source>
    </source>
</evidence>
<evidence type="ECO:0000305" key="4"/>
<evidence type="ECO:0000312" key="5">
    <source>
        <dbReference type="MGI" id="MGI:3045324"/>
    </source>
</evidence>
<name>RTL5_MOUSE</name>
<gene>
    <name evidence="1" type="primary">Rtl5</name>
    <name type="synonym">Kiaa2001</name>
    <name evidence="5" type="synonym">Rgag4</name>
</gene>
<dbReference type="EMBL" id="AK220436">
    <property type="protein sequence ID" value="BAD90267.1"/>
    <property type="status" value="ALT_INIT"/>
    <property type="molecule type" value="mRNA"/>
</dbReference>
<dbReference type="CCDS" id="CCDS30320.1"/>
<dbReference type="RefSeq" id="NP_001265463.1">
    <property type="nucleotide sequence ID" value="NM_001278534.2"/>
</dbReference>
<dbReference type="RefSeq" id="XP_006528164.1">
    <property type="nucleotide sequence ID" value="XM_006528101.3"/>
</dbReference>
<dbReference type="SMR" id="Q5DTT4"/>
<dbReference type="BioGRID" id="237097">
    <property type="interactions" value="1"/>
</dbReference>
<dbReference type="FunCoup" id="Q5DTT4">
    <property type="interactions" value="5"/>
</dbReference>
<dbReference type="STRING" id="10090.ENSMUSP00000109261"/>
<dbReference type="GlyGen" id="Q5DTT4">
    <property type="glycosylation" value="1 site"/>
</dbReference>
<dbReference type="iPTMnet" id="Q5DTT4"/>
<dbReference type="PhosphoSitePlus" id="Q5DTT4"/>
<dbReference type="PaxDb" id="10090-ENSMUSP00000109261"/>
<dbReference type="ProteomicsDB" id="256799"/>
<dbReference type="Antibodypedia" id="51779">
    <property type="antibodies" value="39 antibodies from 8 providers"/>
</dbReference>
<dbReference type="DNASU" id="331474"/>
<dbReference type="Ensembl" id="ENSMUST00000113631.2">
    <property type="protein sequence ID" value="ENSMUSP00000109261.2"/>
    <property type="gene ID" value="ENSMUSG00000049191.13"/>
</dbReference>
<dbReference type="Ensembl" id="ENSMUST00000119076.9">
    <property type="protein sequence ID" value="ENSMUSP00000133001.2"/>
    <property type="gene ID" value="ENSMUSG00000049191.13"/>
</dbReference>
<dbReference type="Ensembl" id="ENSMUST00000188731.2">
    <property type="protein sequence ID" value="ENSMUSP00000139504.2"/>
    <property type="gene ID" value="ENSMUSG00000049191.13"/>
</dbReference>
<dbReference type="GeneID" id="331474"/>
<dbReference type="KEGG" id="mmu:331474"/>
<dbReference type="UCSC" id="uc009tyi.3">
    <property type="organism name" value="mouse"/>
</dbReference>
<dbReference type="AGR" id="MGI:3045324"/>
<dbReference type="CTD" id="340526"/>
<dbReference type="MGI" id="MGI:3045324">
    <property type="gene designation" value="Rtl5"/>
</dbReference>
<dbReference type="VEuPathDB" id="HostDB:ENSMUSG00000049191"/>
<dbReference type="eggNOG" id="ENOG502QPW5">
    <property type="taxonomic scope" value="Eukaryota"/>
</dbReference>
<dbReference type="GeneTree" id="ENSGT00940000163191"/>
<dbReference type="HOGENOM" id="CLU_039587_0_0_1"/>
<dbReference type="InParanoid" id="Q5DTT4"/>
<dbReference type="OMA" id="WPEIEPF"/>
<dbReference type="OrthoDB" id="9628410at2759"/>
<dbReference type="TreeFam" id="TF337113"/>
<dbReference type="BioGRID-ORCS" id="331474">
    <property type="hits" value="5 hits in 77 CRISPR screens"/>
</dbReference>
<dbReference type="ChiTaRS" id="Rtl5">
    <property type="organism name" value="mouse"/>
</dbReference>
<dbReference type="PRO" id="PR:Q5DTT4"/>
<dbReference type="Proteomes" id="UP000000589">
    <property type="component" value="Chromosome X"/>
</dbReference>
<dbReference type="RNAct" id="Q5DTT4">
    <property type="molecule type" value="protein"/>
</dbReference>
<dbReference type="Bgee" id="ENSMUSG00000049191">
    <property type="expression patterns" value="Expressed in ventricular zone and 133 other cell types or tissues"/>
</dbReference>
<dbReference type="ExpressionAtlas" id="Q5DTT4">
    <property type="expression patterns" value="baseline and differential"/>
</dbReference>
<dbReference type="InterPro" id="IPR032549">
    <property type="entry name" value="DUF4939"/>
</dbReference>
<dbReference type="InterPro" id="IPR032567">
    <property type="entry name" value="RTL1-rel"/>
</dbReference>
<dbReference type="PANTHER" id="PTHR15503">
    <property type="entry name" value="LDOC1 RELATED"/>
    <property type="match status" value="1"/>
</dbReference>
<dbReference type="PANTHER" id="PTHR15503:SF36">
    <property type="entry name" value="RETROTRANSPOSON GAG-LIKE PROTEIN 5"/>
    <property type="match status" value="1"/>
</dbReference>
<dbReference type="Pfam" id="PF16297">
    <property type="entry name" value="DUF4939"/>
    <property type="match status" value="1"/>
</dbReference>
<comment type="miscellaneous">
    <text evidence="3">RTL5 is one of at least 11 genes called Mar or Mart related to long terminal repeat retrotransposons. They do not correspond to functional retrotransposons, but rather to neofunctionalized retrotransposons genes.</text>
</comment>
<comment type="sequence caution" evidence="4">
    <conflict type="erroneous initiation">
        <sequence resource="EMBL-CDS" id="BAD90267"/>
    </conflict>
    <text>Extended N-terminus.</text>
</comment>
<protein>
    <recommendedName>
        <fullName>Retrotransposon Gag-like protein 5</fullName>
    </recommendedName>
    <alternativeName>
        <fullName>Retrotransposon gag domain-containing protein 4</fullName>
    </alternativeName>
</protein>
<feature type="chain" id="PRO_0000259630" description="Retrotransposon Gag-like protein 5">
    <location>
        <begin position="1"/>
        <end position="599"/>
    </location>
</feature>
<feature type="region of interest" description="Disordered" evidence="2">
    <location>
        <begin position="77"/>
        <end position="97"/>
    </location>
</feature>
<feature type="region of interest" description="Disordered" evidence="2">
    <location>
        <begin position="116"/>
        <end position="139"/>
    </location>
</feature>
<feature type="region of interest" description="Disordered" evidence="2">
    <location>
        <begin position="377"/>
        <end position="450"/>
    </location>
</feature>
<feature type="compositionally biased region" description="Acidic residues" evidence="2">
    <location>
        <begin position="78"/>
        <end position="90"/>
    </location>
</feature>
<feature type="compositionally biased region" description="Acidic residues" evidence="2">
    <location>
        <begin position="393"/>
        <end position="432"/>
    </location>
</feature>
<feature type="compositionally biased region" description="Acidic residues" evidence="2">
    <location>
        <begin position="439"/>
        <end position="450"/>
    </location>
</feature>
<reference key="1">
    <citation type="submission" date="2005-02" db="EMBL/GenBank/DDBJ databases">
        <title>Prediction of the coding sequences of mouse homologues of KIAA gene. The complete nucleotide sequences of mouse KIAA-homologous cDNAs identified by screening of terminal sequences of cDNA clones randomly sampled from size-fractionated libraries.</title>
        <authorList>
            <person name="Okazaki N."/>
            <person name="Kikuno R.F."/>
            <person name="Ohara R."/>
            <person name="Inamoto S."/>
            <person name="Nagase T."/>
            <person name="Ohara O."/>
            <person name="Koga H."/>
        </authorList>
    </citation>
    <scope>NUCLEOTIDE SEQUENCE [LARGE SCALE MRNA]</scope>
    <source>
        <tissue>Fetal brain</tissue>
    </source>
</reference>
<reference key="2">
    <citation type="journal article" date="2005" name="Cytogenet. Genome Res.">
        <title>A family of neofunctionalized Ty3/gypsy retrotransposon genes in mammalian genomes.</title>
        <authorList>
            <person name="Brandt J."/>
            <person name="Veith A.-M."/>
            <person name="Volff J.-N."/>
        </authorList>
    </citation>
    <scope>GENE FAMILY</scope>
</reference>
<keyword id="KW-1185">Reference proteome</keyword>
<proteinExistence type="evidence at transcript level"/>
<organism>
    <name type="scientific">Mus musculus</name>
    <name type="common">Mouse</name>
    <dbReference type="NCBI Taxonomy" id="10090"/>
    <lineage>
        <taxon>Eukaryota</taxon>
        <taxon>Metazoa</taxon>
        <taxon>Chordata</taxon>
        <taxon>Craniata</taxon>
        <taxon>Vertebrata</taxon>
        <taxon>Euteleostomi</taxon>
        <taxon>Mammalia</taxon>
        <taxon>Eutheria</taxon>
        <taxon>Euarchontoglires</taxon>
        <taxon>Glires</taxon>
        <taxon>Rodentia</taxon>
        <taxon>Myomorpha</taxon>
        <taxon>Muroidea</taxon>
        <taxon>Muridae</taxon>
        <taxon>Murinae</taxon>
        <taxon>Mus</taxon>
        <taxon>Mus</taxon>
    </lineage>
</organism>